<feature type="signal peptide" evidence="5">
    <location>
        <begin position="1"/>
        <end position="24"/>
    </location>
</feature>
<feature type="propeptide" id="PRO_0000391812" evidence="1">
    <location>
        <begin position="25"/>
        <end position="45"/>
    </location>
</feature>
<feature type="chain" id="PRO_0000391813" description="Alpha-conotoxin-like Cp20.5">
    <location>
        <begin position="46"/>
        <end position="95"/>
    </location>
</feature>
<feature type="modified residue" description="4-carboxyglutamate" evidence="6">
    <location>
        <position position="50"/>
    </location>
</feature>
<feature type="modified residue" description="4-hydroxyproline" evidence="6">
    <location>
        <position position="56"/>
    </location>
</feature>
<feature type="disulfide bond" description="Interchain (with C-63)" evidence="2">
    <location>
        <position position="51"/>
    </location>
</feature>
<feature type="disulfide bond" description="Interchain (with C-51)" evidence="2">
    <location>
        <position position="63"/>
    </location>
</feature>
<feature type="disulfide bond" evidence="2">
    <location>
        <begin position="64"/>
        <end position="73"/>
    </location>
</feature>
<feature type="disulfide bond" evidence="2">
    <location>
        <begin position="69"/>
        <end position="81"/>
    </location>
</feature>
<feature type="disulfide bond" evidence="2">
    <location>
        <begin position="74"/>
        <end position="91"/>
    </location>
</feature>
<feature type="disulfide bond" evidence="2">
    <location>
        <begin position="79"/>
        <end position="93"/>
    </location>
</feature>
<feature type="sequence conflict" description="In Ref. 1; AA sequence." evidence="7" ref="1">
    <original>D</original>
    <variation>N</variation>
    <location>
        <position position="54"/>
    </location>
</feature>
<sequence length="95" mass="10359">MPKLAVVLLVLLILPLSYFDAAGGQAVQGDRRGNGLARYLQRNGRDNEAECQIDTPGSSWGKCCMTRMCGTMCCSRSVCTCVYHWRRGHGCSCPG</sequence>
<protein>
    <recommendedName>
        <fullName>Alpha-conotoxin-like Cp20.5</fullName>
    </recommendedName>
</protein>
<accession>P0CE27</accession>
<evidence type="ECO:0000250" key="1"/>
<evidence type="ECO:0000250" key="2">
    <source>
        <dbReference type="UniProtKB" id="A0A0A0VBX4"/>
    </source>
</evidence>
<evidence type="ECO:0000250" key="3">
    <source>
        <dbReference type="UniProtKB" id="C3VVN5"/>
    </source>
</evidence>
<evidence type="ECO:0000250" key="4">
    <source>
        <dbReference type="UniProtKB" id="P0C1W6"/>
    </source>
</evidence>
<evidence type="ECO:0000255" key="5"/>
<evidence type="ECO:0000269" key="6">
    <source>
    </source>
</evidence>
<evidence type="ECO:0000305" key="7"/>
<organism>
    <name type="scientific">Conus capitaneus</name>
    <name type="common">Captain cone</name>
    <dbReference type="NCBI Taxonomy" id="89439"/>
    <lineage>
        <taxon>Eukaryota</taxon>
        <taxon>Metazoa</taxon>
        <taxon>Spiralia</taxon>
        <taxon>Lophotrochozoa</taxon>
        <taxon>Mollusca</taxon>
        <taxon>Gastropoda</taxon>
        <taxon>Caenogastropoda</taxon>
        <taxon>Neogastropoda</taxon>
        <taxon>Conoidea</taxon>
        <taxon>Conidae</taxon>
        <taxon>Conus</taxon>
        <taxon>Rhizoconus</taxon>
    </lineage>
</organism>
<dbReference type="SMR" id="P0CE27"/>
<dbReference type="GO" id="GO:0005576">
    <property type="term" value="C:extracellular region"/>
    <property type="evidence" value="ECO:0007669"/>
    <property type="project" value="UniProtKB-SubCell"/>
</dbReference>
<dbReference type="GO" id="GO:0035792">
    <property type="term" value="C:host cell postsynaptic membrane"/>
    <property type="evidence" value="ECO:0007669"/>
    <property type="project" value="UniProtKB-KW"/>
</dbReference>
<dbReference type="GO" id="GO:0030550">
    <property type="term" value="F:acetylcholine receptor inhibitor activity"/>
    <property type="evidence" value="ECO:0007669"/>
    <property type="project" value="UniProtKB-KW"/>
</dbReference>
<dbReference type="GO" id="GO:0099106">
    <property type="term" value="F:ion channel regulator activity"/>
    <property type="evidence" value="ECO:0007669"/>
    <property type="project" value="UniProtKB-KW"/>
</dbReference>
<dbReference type="GO" id="GO:0090729">
    <property type="term" value="F:toxin activity"/>
    <property type="evidence" value="ECO:0007669"/>
    <property type="project" value="UniProtKB-KW"/>
</dbReference>
<reference key="1">
    <citation type="journal article" date="2009" name="Biochemistry">
        <title>Novel alpha D-conopeptides and their precursors identified by cDNA cloning define the D-conotoxin superfamily.</title>
        <authorList>
            <person name="Loughnan M.L."/>
            <person name="Nicke A."/>
            <person name="Lawrence N."/>
            <person name="Lewis R.J."/>
        </authorList>
    </citation>
    <scope>NUCLEOTIDE SEQUENCE [MRNA]</scope>
    <scope>PROTEIN SEQUENCE OF 46-58</scope>
    <scope>GAMMA-CARBOXYGLUTAMATION AT GLU-50</scope>
    <scope>HYDROXYLATION AT PRO-56</scope>
    <source>
        <tissue>Venom</tissue>
        <tissue>Venom duct</tissue>
    </source>
</reference>
<keyword id="KW-0008">Acetylcholine receptor inhibiting toxin</keyword>
<keyword id="KW-0903">Direct protein sequencing</keyword>
<keyword id="KW-1015">Disulfide bond</keyword>
<keyword id="KW-0301">Gamma-carboxyglutamic acid</keyword>
<keyword id="KW-0379">Hydroxylation</keyword>
<keyword id="KW-0872">Ion channel impairing toxin</keyword>
<keyword id="KW-0528">Neurotoxin</keyword>
<keyword id="KW-0629">Postsynaptic neurotoxin</keyword>
<keyword id="KW-0964">Secreted</keyword>
<keyword id="KW-0732">Signal</keyword>
<keyword id="KW-0800">Toxin</keyword>
<proteinExistence type="evidence at protein level"/>
<comment type="function">
    <text evidence="4">Alpha-conotoxins act on postsynaptic membranes, they bind to the nicotinic acetylcholine receptors (nAChR) and thus inhibit them. Through its two C-terminal domains, this homodimeric protein would bind to two nAChR allosteric sites, located outside the nAChR C-loop of the principal binding face and at the adjacent binding interface in a clockwise direction. This toxin specifically blocks mammalian neuronal nAChR of the alpha-7/CHRNA7, alpha-3-beta-2/CHRNA3-CHRNB2 and alpha-4-beta-2/CHRNA4-CHRNB2 subtypes.</text>
</comment>
<comment type="subunit">
    <text evidence="3">Hetero-, homo- or pseudo-homodimer (identical sequence, different post-translational modifications).</text>
</comment>
<comment type="subcellular location">
    <subcellularLocation>
        <location>Secreted</location>
    </subcellularLocation>
</comment>
<comment type="tissue specificity">
    <text>Expressed by the venom duct.</text>
</comment>
<comment type="domain">
    <text>The cysteine framework is XX (C-CC-C-CC-C-C-C-C).</text>
</comment>
<comment type="domain">
    <text evidence="4">Displays a mini-granulin fold, a structure composed of two short, stacked beta-hairpins connected by two parallel disulfide bonds. This newly described fold is derived from the same cysteine connectivity as knottins (ICK fold). The name 'mini-granulin fold' comes from the structural homology with the N-terminal region of the human granulin.</text>
</comment>
<comment type="similarity">
    <text evidence="7">Belongs to the conotoxin D superfamily.</text>
</comment>
<name>CXAT5_CONCE</name>